<sequence>MPPANGKKGKKGGAAKAVRRIQYRPKSFKHSRFVKHAHFWSAAPEEDFDAILAEMQLADAKTAAKEATKKDAKGGKGKANGSAAATAAPEEAKQAWQAEIAAMKPIDEQFPDGKFPHGIDESPYYLKGKDGRVATDRESNEEKKALDISYEEVWQDYRRSAEAHRQVRKYVKSWIKPGMTMIEICERLETTSRRLIKEQGLEAGLAFPTGCSLNHCAAHYTPNAGDTTVLQYGDVCKIDYGIHVRGRLIDSAFTVHFDPKFDPLVEAVREATNAGIKESGIDVRLCDVGEIVEEVMTSHEVELDGKSYVVKPIRNLNGHSIAQYRIHAGKTVPIVKGGEQTKMEENEIYAIETFGSTGKGYVHDDMETSHYMKNFELADEKIPLRLQKSKGLLNLIDKNFATLAFCRRWIDRLGETKYLMALKDLCDKGIVDPYPPLCDVKGCYTAQWEHTILMRPTVKEVVSRGDDY</sequence>
<feature type="chain" id="PRO_0000448244" description="Methionine aminopeptidase 2">
    <location>
        <begin position="1"/>
        <end position="468"/>
    </location>
</feature>
<feature type="region of interest" description="Disordered" evidence="4">
    <location>
        <begin position="63"/>
        <end position="87"/>
    </location>
</feature>
<feature type="compositionally biased region" description="Basic and acidic residues" evidence="4">
    <location>
        <begin position="63"/>
        <end position="74"/>
    </location>
</feature>
<feature type="binding site" evidence="2">
    <location>
        <position position="219"/>
    </location>
    <ligand>
        <name>substrate</name>
    </ligand>
</feature>
<feature type="binding site" evidence="2">
    <location>
        <position position="239"/>
    </location>
    <ligand>
        <name>a divalent metal cation</name>
        <dbReference type="ChEBI" id="CHEBI:60240"/>
        <label>1</label>
    </ligand>
</feature>
<feature type="binding site" evidence="2">
    <location>
        <position position="250"/>
    </location>
    <ligand>
        <name>a divalent metal cation</name>
        <dbReference type="ChEBI" id="CHEBI:60240"/>
        <label>1</label>
    </ligand>
</feature>
<feature type="binding site" evidence="2">
    <location>
        <position position="250"/>
    </location>
    <ligand>
        <name>a divalent metal cation</name>
        <dbReference type="ChEBI" id="CHEBI:60240"/>
        <label>2</label>
        <note>catalytic</note>
    </ligand>
</feature>
<feature type="binding site" evidence="2">
    <location>
        <position position="319"/>
    </location>
    <ligand>
        <name>a divalent metal cation</name>
        <dbReference type="ChEBI" id="CHEBI:60240"/>
        <label>2</label>
        <note>catalytic</note>
    </ligand>
</feature>
<feature type="binding site" evidence="2">
    <location>
        <position position="327"/>
    </location>
    <ligand>
        <name>substrate</name>
    </ligand>
</feature>
<feature type="binding site" evidence="2">
    <location>
        <position position="352"/>
    </location>
    <ligand>
        <name>a divalent metal cation</name>
        <dbReference type="ChEBI" id="CHEBI:60240"/>
        <label>2</label>
        <note>catalytic</note>
    </ligand>
</feature>
<feature type="binding site" evidence="2">
    <location>
        <position position="449"/>
    </location>
    <ligand>
        <name>a divalent metal cation</name>
        <dbReference type="ChEBI" id="CHEBI:60240"/>
        <label>1</label>
    </ligand>
</feature>
<feature type="binding site" evidence="2">
    <location>
        <position position="449"/>
    </location>
    <ligand>
        <name>a divalent metal cation</name>
        <dbReference type="ChEBI" id="CHEBI:60240"/>
        <label>2</label>
        <note>catalytic</note>
    </ligand>
</feature>
<feature type="splice variant" id="VSP_060368" description="In isoform a and isoform c." evidence="7">
    <location>
        <begin position="18"/>
        <end position="41"/>
    </location>
</feature>
<feature type="splice variant" id="VSP_060369" description="In isoform c." evidence="7">
    <location>
        <begin position="237"/>
        <end position="427"/>
    </location>
</feature>
<organism evidence="8">
    <name type="scientific">Caenorhabditis elegans</name>
    <dbReference type="NCBI Taxonomy" id="6239"/>
    <lineage>
        <taxon>Eukaryota</taxon>
        <taxon>Metazoa</taxon>
        <taxon>Ecdysozoa</taxon>
        <taxon>Nematoda</taxon>
        <taxon>Chromadorea</taxon>
        <taxon>Rhabditida</taxon>
        <taxon>Rhabditina</taxon>
        <taxon>Rhabditomorpha</taxon>
        <taxon>Rhabditoidea</taxon>
        <taxon>Rhabditidae</taxon>
        <taxon>Peloderinae</taxon>
        <taxon>Caenorhabditis</taxon>
    </lineage>
</organism>
<keyword id="KW-0025">Alternative splicing</keyword>
<keyword id="KW-0031">Aminopeptidase</keyword>
<keyword id="KW-0963">Cytoplasm</keyword>
<keyword id="KW-0378">Hydrolase</keyword>
<keyword id="KW-0479">Metal-binding</keyword>
<keyword id="KW-0645">Protease</keyword>
<keyword id="KW-1185">Reference proteome</keyword>
<gene>
    <name evidence="6 10" type="primary">map-2</name>
    <name evidence="10" type="ORF">Y116A8A.9</name>
</gene>
<name>MAP2_CAEEL</name>
<proteinExistence type="evidence at protein level"/>
<evidence type="ECO:0000255" key="1"/>
<evidence type="ECO:0000255" key="2">
    <source>
        <dbReference type="HAMAP-Rule" id="MF_03175"/>
    </source>
</evidence>
<evidence type="ECO:0000255" key="3">
    <source>
        <dbReference type="RuleBase" id="RU003653"/>
    </source>
</evidence>
<evidence type="ECO:0000256" key="4">
    <source>
        <dbReference type="SAM" id="MobiDB-lite"/>
    </source>
</evidence>
<evidence type="ECO:0000269" key="5">
    <source>
    </source>
</evidence>
<evidence type="ECO:0000303" key="6">
    <source>
    </source>
</evidence>
<evidence type="ECO:0000305" key="7"/>
<evidence type="ECO:0000312" key="8">
    <source>
        <dbReference type="Proteomes" id="UP000001940"/>
    </source>
</evidence>
<evidence type="ECO:0000312" key="9">
    <source>
        <dbReference type="WormBase" id="Y116A8A.9a"/>
    </source>
</evidence>
<evidence type="ECO:0000312" key="10">
    <source>
        <dbReference type="WormBase" id="Y116A8A.9b"/>
    </source>
</evidence>
<evidence type="ECO:0000312" key="11">
    <source>
        <dbReference type="WormBase" id="Y116A8A.9c"/>
    </source>
</evidence>
<reference evidence="8" key="1">
    <citation type="journal article" date="1998" name="Science">
        <title>Genome sequence of the nematode C. elegans: a platform for investigating biology.</title>
        <authorList>
            <consortium name="The C. elegans sequencing consortium"/>
        </authorList>
    </citation>
    <scope>NUCLEOTIDE SEQUENCE [LARGE SCALE GENOMIC DNA]</scope>
    <source>
        <strain evidence="8">Bristol N2</strain>
    </source>
</reference>
<reference evidence="7" key="2">
    <citation type="journal article" date="2004" name="FEBS Lett.">
        <title>The C. elegans methionine aminopeptidase 2 analog map-2 is required for germ cell proliferation.</title>
        <authorList>
            <person name="Boxem M."/>
            <person name="Tsai C.W."/>
            <person name="Zhang Y."/>
            <person name="Saito R.M."/>
            <person name="Liu J.O."/>
        </authorList>
    </citation>
    <scope>FUNCTION</scope>
    <scope>CATALYTIC ACTIVITY</scope>
    <scope>ACTIVITY REGULATION</scope>
    <scope>DISRUPTION PHENOTYPE</scope>
</reference>
<comment type="function">
    <text evidence="5">Cotranslationally removes the N-terminal methionine from nascent proteins (PubMed:15474045). The N-terminal methionine is often cleaved when the second residue in the primary sequence is small and uncharged (Met-Ala-, Cys, Gly, Pro, Ser, Thr, or Val) (PubMed:15474045). Required for germ cell proliferation and/or differentiation (PubMed:15474045).</text>
</comment>
<comment type="catalytic activity">
    <reaction evidence="5">
        <text>Release of N-terminal amino acids, preferentially methionine, from peptides and arylamides.</text>
        <dbReference type="EC" id="3.4.11.18"/>
    </reaction>
</comment>
<comment type="cofactor">
    <cofactor evidence="2 3">
        <name>Co(2+)</name>
        <dbReference type="ChEBI" id="CHEBI:48828"/>
    </cofactor>
    <cofactor evidence="2 3">
        <name>Zn(2+)</name>
        <dbReference type="ChEBI" id="CHEBI:29105"/>
    </cofactor>
    <cofactor evidence="2 3">
        <name>Mn(2+)</name>
        <dbReference type="ChEBI" id="CHEBI:29035"/>
    </cofactor>
    <cofactor evidence="2 3">
        <name>Fe(2+)</name>
        <dbReference type="ChEBI" id="CHEBI:29033"/>
    </cofactor>
    <text evidence="2 3">Binds 2 divalent metal cations per subunit. Has a high-affinity and a low affinity metal-binding site. The true nature of the physiological cofactor is under debate. The enzyme is active with cobalt, zinc, manganese or divalent iron ions. Most likely, methionine aminopeptidases function as mononuclear Fe(2+)-metalloproteases under physiological conditions, and the catalytically relevant metal-binding site has been assigned to the histidine-containing high-affinity site.</text>
</comment>
<comment type="activity regulation">
    <text evidence="5">Inhibited by the fumagillin analog, TNP-470.</text>
</comment>
<comment type="subcellular location">
    <subcellularLocation>
        <location evidence="1 2">Cytoplasm</location>
    </subcellularLocation>
</comment>
<comment type="alternative products">
    <event type="alternative splicing"/>
    <isoform>
        <id>H1UBK1-1</id>
        <name evidence="10">b</name>
        <sequence type="displayed"/>
    </isoform>
    <isoform>
        <id>H1UBK1-2</id>
        <name evidence="9">a</name>
        <sequence type="described" ref="VSP_060368"/>
    </isoform>
    <isoform>
        <id>H1UBK1-3</id>
        <name evidence="11">c</name>
        <sequence type="described" ref="VSP_060368 VSP_060369"/>
    </isoform>
</comment>
<comment type="disruption phenotype">
    <text evidence="5">RNAi-mediated knockdown causes sterility due to a defect in germ cell proliferation and/or differentiation.</text>
</comment>
<comment type="similarity">
    <text evidence="1 2">Belongs to the peptidase M24A family. Methionine aminopeptidase eukaryotic type 2 subfamily.</text>
</comment>
<accession>H1UBK1</accession>
<accession>H1UBK2</accession>
<accession>Q9U2V9</accession>
<dbReference type="EC" id="3.4.11.18" evidence="5"/>
<dbReference type="EMBL" id="BX284604">
    <property type="protein sequence ID" value="CAB55167.1"/>
    <property type="molecule type" value="Genomic_DNA"/>
</dbReference>
<dbReference type="EMBL" id="BX284604">
    <property type="protein sequence ID" value="CCF23399.1"/>
    <property type="molecule type" value="Genomic_DNA"/>
</dbReference>
<dbReference type="EMBL" id="BX284604">
    <property type="protein sequence ID" value="CCF23400.1"/>
    <property type="molecule type" value="Genomic_DNA"/>
</dbReference>
<dbReference type="RefSeq" id="NP_001255905.1">
    <property type="nucleotide sequence ID" value="NM_001268976.1"/>
</dbReference>
<dbReference type="RefSeq" id="NP_001255906.1">
    <molecule id="H1UBK1-2"/>
    <property type="nucleotide sequence ID" value="NM_001268977.5"/>
</dbReference>
<dbReference type="RefSeq" id="NP_001255907.1">
    <molecule id="H1UBK1-1"/>
    <property type="nucleotide sequence ID" value="NM_001268978.5"/>
</dbReference>
<dbReference type="RefSeq" id="NP_001360158.1">
    <molecule id="H1UBK1-3"/>
    <property type="nucleotide sequence ID" value="NM_001372970.2"/>
</dbReference>
<dbReference type="SMR" id="H1UBK1"/>
<dbReference type="FunCoup" id="H1UBK1">
    <property type="interactions" value="2724"/>
</dbReference>
<dbReference type="STRING" id="6239.Y116A8A.9b.2"/>
<dbReference type="MEROPS" id="M24.002"/>
<dbReference type="PaxDb" id="6239-Y116A8A.9b.2"/>
<dbReference type="PeptideAtlas" id="H1UBK1"/>
<dbReference type="EnsemblMetazoa" id="Y116A8A.9a.1">
    <molecule id="H1UBK1-2"/>
    <property type="protein sequence ID" value="Y116A8A.9a.1"/>
    <property type="gene ID" value="WBGene00003130"/>
</dbReference>
<dbReference type="EnsemblMetazoa" id="Y116A8A.9b.1">
    <molecule id="H1UBK1-1"/>
    <property type="protein sequence ID" value="Y116A8A.9b.1"/>
    <property type="gene ID" value="WBGene00003130"/>
</dbReference>
<dbReference type="EnsemblMetazoa" id="Y116A8A.9c.1">
    <molecule id="H1UBK1-3"/>
    <property type="protein sequence ID" value="Y116A8A.9c.1"/>
    <property type="gene ID" value="WBGene00003130"/>
</dbReference>
<dbReference type="GeneID" id="178468"/>
<dbReference type="KEGG" id="cel:CELE_Y116A8A.9"/>
<dbReference type="UCSC" id="Y116A8A.9.2">
    <property type="organism name" value="c. elegans"/>
</dbReference>
<dbReference type="AGR" id="WB:WBGene00003130"/>
<dbReference type="CTD" id="178468"/>
<dbReference type="WormBase" id="Y116A8A.9a">
    <molecule id="H1UBK1-2"/>
    <property type="protein sequence ID" value="CE24146"/>
    <property type="gene ID" value="WBGene00003130"/>
    <property type="gene designation" value="map-2"/>
</dbReference>
<dbReference type="WormBase" id="Y116A8A.9b">
    <molecule id="H1UBK1-1"/>
    <property type="protein sequence ID" value="CE47033"/>
    <property type="gene ID" value="WBGene00003130"/>
    <property type="gene designation" value="map-2"/>
</dbReference>
<dbReference type="WormBase" id="Y116A8A.9c">
    <molecule id="H1UBK1-3"/>
    <property type="protein sequence ID" value="CE46993"/>
    <property type="gene ID" value="WBGene00003130"/>
    <property type="gene designation" value="map-2"/>
</dbReference>
<dbReference type="eggNOG" id="KOG2775">
    <property type="taxonomic scope" value="Eukaryota"/>
</dbReference>
<dbReference type="GeneTree" id="ENSGT00940000172436"/>
<dbReference type="HOGENOM" id="CLU_015857_7_2_1"/>
<dbReference type="InParanoid" id="H1UBK1"/>
<dbReference type="OMA" id="GNGWVYD"/>
<dbReference type="OrthoDB" id="7848262at2759"/>
<dbReference type="PhylomeDB" id="H1UBK1"/>
<dbReference type="PRO" id="PR:H1UBK1"/>
<dbReference type="Proteomes" id="UP000001940">
    <property type="component" value="Chromosome IV"/>
</dbReference>
<dbReference type="Bgee" id="WBGene00003130">
    <property type="expression patterns" value="Expressed in larva and 4 other cell types or tissues"/>
</dbReference>
<dbReference type="GO" id="GO:0005737">
    <property type="term" value="C:cytoplasm"/>
    <property type="evidence" value="ECO:0000318"/>
    <property type="project" value="GO_Central"/>
</dbReference>
<dbReference type="GO" id="GO:0004177">
    <property type="term" value="F:aminopeptidase activity"/>
    <property type="evidence" value="ECO:0000318"/>
    <property type="project" value="GO_Central"/>
</dbReference>
<dbReference type="GO" id="GO:0008238">
    <property type="term" value="F:exopeptidase activity"/>
    <property type="evidence" value="ECO:0000314"/>
    <property type="project" value="WormBase"/>
</dbReference>
<dbReference type="GO" id="GO:0004239">
    <property type="term" value="F:initiator methionyl aminopeptidase activity"/>
    <property type="evidence" value="ECO:0007669"/>
    <property type="project" value="UniProtKB-UniRule"/>
</dbReference>
<dbReference type="GO" id="GO:0046872">
    <property type="term" value="F:metal ion binding"/>
    <property type="evidence" value="ECO:0007669"/>
    <property type="project" value="UniProtKB-UniRule"/>
</dbReference>
<dbReference type="GO" id="GO:0070006">
    <property type="term" value="F:metalloaminopeptidase activity"/>
    <property type="evidence" value="ECO:0007669"/>
    <property type="project" value="UniProtKB-UniRule"/>
</dbReference>
<dbReference type="GO" id="GO:0008235">
    <property type="term" value="F:metalloexopeptidase activity"/>
    <property type="evidence" value="ECO:0000318"/>
    <property type="project" value="GO_Central"/>
</dbReference>
<dbReference type="GO" id="GO:0036093">
    <property type="term" value="P:germ cell proliferation"/>
    <property type="evidence" value="ECO:0000315"/>
    <property type="project" value="WormBase"/>
</dbReference>
<dbReference type="GO" id="GO:0006508">
    <property type="term" value="P:proteolysis"/>
    <property type="evidence" value="ECO:0007669"/>
    <property type="project" value="UniProtKB-KW"/>
</dbReference>
<dbReference type="CDD" id="cd01088">
    <property type="entry name" value="MetAP2"/>
    <property type="match status" value="1"/>
</dbReference>
<dbReference type="FunFam" id="1.10.10.10:FF:000106">
    <property type="entry name" value="Methionine aminopeptidase 2"/>
    <property type="match status" value="1"/>
</dbReference>
<dbReference type="Gene3D" id="3.90.230.10">
    <property type="entry name" value="Creatinase/methionine aminopeptidase superfamily"/>
    <property type="match status" value="1"/>
</dbReference>
<dbReference type="Gene3D" id="1.10.10.10">
    <property type="entry name" value="Winged helix-like DNA-binding domain superfamily/Winged helix DNA-binding domain"/>
    <property type="match status" value="1"/>
</dbReference>
<dbReference type="HAMAP" id="MF_03175">
    <property type="entry name" value="MetAP_2_euk"/>
    <property type="match status" value="1"/>
</dbReference>
<dbReference type="InterPro" id="IPR036005">
    <property type="entry name" value="Creatinase/aminopeptidase-like"/>
</dbReference>
<dbReference type="InterPro" id="IPR050247">
    <property type="entry name" value="Met_Aminopeptidase_Type2"/>
</dbReference>
<dbReference type="InterPro" id="IPR000994">
    <property type="entry name" value="Pept_M24"/>
</dbReference>
<dbReference type="InterPro" id="IPR001714">
    <property type="entry name" value="Pept_M24_MAP"/>
</dbReference>
<dbReference type="InterPro" id="IPR002468">
    <property type="entry name" value="Pept_M24A_MAP2"/>
</dbReference>
<dbReference type="InterPro" id="IPR036388">
    <property type="entry name" value="WH-like_DNA-bd_sf"/>
</dbReference>
<dbReference type="InterPro" id="IPR036390">
    <property type="entry name" value="WH_DNA-bd_sf"/>
</dbReference>
<dbReference type="NCBIfam" id="TIGR00501">
    <property type="entry name" value="met_pdase_II"/>
    <property type="match status" value="1"/>
</dbReference>
<dbReference type="PANTHER" id="PTHR45777">
    <property type="entry name" value="METHIONINE AMINOPEPTIDASE 2"/>
    <property type="match status" value="1"/>
</dbReference>
<dbReference type="PANTHER" id="PTHR45777:SF2">
    <property type="entry name" value="METHIONINE AMINOPEPTIDASE 2"/>
    <property type="match status" value="1"/>
</dbReference>
<dbReference type="Pfam" id="PF00557">
    <property type="entry name" value="Peptidase_M24"/>
    <property type="match status" value="1"/>
</dbReference>
<dbReference type="PRINTS" id="PR00599">
    <property type="entry name" value="MAPEPTIDASE"/>
</dbReference>
<dbReference type="SUPFAM" id="SSF55920">
    <property type="entry name" value="Creatinase/aminopeptidase"/>
    <property type="match status" value="1"/>
</dbReference>
<dbReference type="SUPFAM" id="SSF46785">
    <property type="entry name" value="Winged helix' DNA-binding domain"/>
    <property type="match status" value="1"/>
</dbReference>
<protein>
    <recommendedName>
        <fullName evidence="2">Methionine aminopeptidase 2</fullName>
        <shortName evidence="2">MAP 2</shortName>
        <shortName evidence="2">MetAP 2</shortName>
        <ecNumber evidence="5">3.4.11.18</ecNumber>
    </recommendedName>
    <alternativeName>
        <fullName evidence="2">Peptidase M</fullName>
    </alternativeName>
</protein>